<keyword id="KW-0963">Cytoplasm</keyword>
<keyword id="KW-0694">RNA-binding</keyword>
<reference key="1">
    <citation type="journal article" date="2007" name="PLoS ONE">
        <title>Complete genomic characterization of a pathogenic A.II strain of Francisella tularensis subspecies tularensis.</title>
        <authorList>
            <person name="Beckstrom-Sternberg S.M."/>
            <person name="Auerbach R.K."/>
            <person name="Godbole S."/>
            <person name="Pearson J.V."/>
            <person name="Beckstrom-Sternberg J.S."/>
            <person name="Deng Z."/>
            <person name="Munk C."/>
            <person name="Kubota K."/>
            <person name="Zhou Y."/>
            <person name="Bruce D."/>
            <person name="Noronha J."/>
            <person name="Scheuermann R.H."/>
            <person name="Wang A."/>
            <person name="Wei X."/>
            <person name="Wang J."/>
            <person name="Hao J."/>
            <person name="Wagner D.M."/>
            <person name="Brettin T.S."/>
            <person name="Brown N."/>
            <person name="Gilna P."/>
            <person name="Keim P.S."/>
        </authorList>
    </citation>
    <scope>NUCLEOTIDE SEQUENCE [LARGE SCALE GENOMIC DNA]</scope>
    <source>
        <strain>WY96-3418</strain>
    </source>
</reference>
<proteinExistence type="inferred from homology"/>
<comment type="function">
    <text evidence="1">Required for rescue of stalled ribosomes mediated by trans-translation. Binds to transfer-messenger RNA (tmRNA), required for stable association of tmRNA with ribosomes. tmRNA and SmpB together mimic tRNA shape, replacing the anticodon stem-loop with SmpB. tmRNA is encoded by the ssrA gene; the 2 termini fold to resemble tRNA(Ala) and it encodes a 'tag peptide', a short internal open reading frame. During trans-translation Ala-aminoacylated tmRNA acts like a tRNA, entering the A-site of stalled ribosomes, displacing the stalled mRNA. The ribosome then switches to translate the ORF on the tmRNA; the nascent peptide is terminated with the 'tag peptide' encoded by the tmRNA and targeted for degradation. The ribosome is freed to recommence translation, which seems to be the essential function of trans-translation.</text>
</comment>
<comment type="subcellular location">
    <subcellularLocation>
        <location evidence="1">Cytoplasm</location>
    </subcellularLocation>
    <text evidence="1">The tmRNA-SmpB complex associates with stalled 70S ribosomes.</text>
</comment>
<comment type="similarity">
    <text evidence="1">Belongs to the SmpB family.</text>
</comment>
<dbReference type="EMBL" id="CP000608">
    <property type="protein sequence ID" value="ABO47015.1"/>
    <property type="molecule type" value="Genomic_DNA"/>
</dbReference>
<dbReference type="RefSeq" id="WP_003015283.1">
    <property type="nucleotide sequence ID" value="NC_009257.1"/>
</dbReference>
<dbReference type="SMR" id="A4IYL4"/>
<dbReference type="KEGG" id="ftw:FTW_1234"/>
<dbReference type="HOGENOM" id="CLU_108953_3_0_6"/>
<dbReference type="GO" id="GO:0005829">
    <property type="term" value="C:cytosol"/>
    <property type="evidence" value="ECO:0007669"/>
    <property type="project" value="TreeGrafter"/>
</dbReference>
<dbReference type="GO" id="GO:0003723">
    <property type="term" value="F:RNA binding"/>
    <property type="evidence" value="ECO:0007669"/>
    <property type="project" value="UniProtKB-UniRule"/>
</dbReference>
<dbReference type="GO" id="GO:0070929">
    <property type="term" value="P:trans-translation"/>
    <property type="evidence" value="ECO:0007669"/>
    <property type="project" value="UniProtKB-UniRule"/>
</dbReference>
<dbReference type="CDD" id="cd09294">
    <property type="entry name" value="SmpB"/>
    <property type="match status" value="1"/>
</dbReference>
<dbReference type="Gene3D" id="2.40.280.10">
    <property type="match status" value="1"/>
</dbReference>
<dbReference type="HAMAP" id="MF_00023">
    <property type="entry name" value="SmpB"/>
    <property type="match status" value="1"/>
</dbReference>
<dbReference type="InterPro" id="IPR023620">
    <property type="entry name" value="SmpB"/>
</dbReference>
<dbReference type="InterPro" id="IPR000037">
    <property type="entry name" value="SsrA-bd_prot"/>
</dbReference>
<dbReference type="InterPro" id="IPR020081">
    <property type="entry name" value="SsrA-bd_prot_CS"/>
</dbReference>
<dbReference type="NCBIfam" id="NF003843">
    <property type="entry name" value="PRK05422.1"/>
    <property type="match status" value="1"/>
</dbReference>
<dbReference type="NCBIfam" id="TIGR00086">
    <property type="entry name" value="smpB"/>
    <property type="match status" value="1"/>
</dbReference>
<dbReference type="PANTHER" id="PTHR30308:SF2">
    <property type="entry name" value="SSRA-BINDING PROTEIN"/>
    <property type="match status" value="1"/>
</dbReference>
<dbReference type="PANTHER" id="PTHR30308">
    <property type="entry name" value="TMRNA-BINDING COMPONENT OF TRANS-TRANSLATION TAGGING COMPLEX"/>
    <property type="match status" value="1"/>
</dbReference>
<dbReference type="Pfam" id="PF01668">
    <property type="entry name" value="SmpB"/>
    <property type="match status" value="1"/>
</dbReference>
<dbReference type="SUPFAM" id="SSF74982">
    <property type="entry name" value="Small protein B (SmpB)"/>
    <property type="match status" value="1"/>
</dbReference>
<dbReference type="PROSITE" id="PS01317">
    <property type="entry name" value="SSRP"/>
    <property type="match status" value="1"/>
</dbReference>
<sequence>MSKHKVSPATIAKNKKALHDYTILEKFEAGIVLQGWEVKSIRAGKVQMVDSHVHIKHGEAWLFNCLITPLLSASTHVVADAAATRKLLLNRREINKIMGRIEQKGFTCIPLSMYWKGPRVKVEIALAQGKKVHDKRQAQKDKDWAREKDRLFKKAYK</sequence>
<feature type="chain" id="PRO_1000002062" description="SsrA-binding protein">
    <location>
        <begin position="1"/>
        <end position="157"/>
    </location>
</feature>
<feature type="region of interest" description="Disordered" evidence="2">
    <location>
        <begin position="132"/>
        <end position="157"/>
    </location>
</feature>
<feature type="compositionally biased region" description="Basic and acidic residues" evidence="2">
    <location>
        <begin position="135"/>
        <end position="157"/>
    </location>
</feature>
<name>SSRP_FRATW</name>
<protein>
    <recommendedName>
        <fullName evidence="1">SsrA-binding protein</fullName>
    </recommendedName>
    <alternativeName>
        <fullName evidence="1">Small protein B</fullName>
    </alternativeName>
</protein>
<organism>
    <name type="scientific">Francisella tularensis subsp. tularensis (strain WY96-3418)</name>
    <dbReference type="NCBI Taxonomy" id="418136"/>
    <lineage>
        <taxon>Bacteria</taxon>
        <taxon>Pseudomonadati</taxon>
        <taxon>Pseudomonadota</taxon>
        <taxon>Gammaproteobacteria</taxon>
        <taxon>Thiotrichales</taxon>
        <taxon>Francisellaceae</taxon>
        <taxon>Francisella</taxon>
    </lineage>
</organism>
<evidence type="ECO:0000255" key="1">
    <source>
        <dbReference type="HAMAP-Rule" id="MF_00023"/>
    </source>
</evidence>
<evidence type="ECO:0000256" key="2">
    <source>
        <dbReference type="SAM" id="MobiDB-lite"/>
    </source>
</evidence>
<gene>
    <name evidence="1" type="primary">smpB</name>
    <name type="ordered locus">FTW_1234</name>
</gene>
<accession>A4IYL4</accession>